<protein>
    <recommendedName>
        <fullName evidence="1">Aminomethyltransferase</fullName>
        <ecNumber evidence="1">2.1.2.10</ecNumber>
    </recommendedName>
    <alternativeName>
        <fullName evidence="1">Glycine cleavage system T protein</fullName>
    </alternativeName>
</protein>
<name>GCST_PROMS</name>
<sequence length="370" mass="41680">MDLLKSPLYSKYVESNAKLVDFAGWEMPISFSGLIKEHESVRYSAGLFDISHMGVISIKGINPKDYIQKLFPTNLYSFCEGQGLYTVMLNDKGGIIDDLIIYDLGIQKNDISELLLIVNASRYEEDFQWIKNNLNMSEISITNFKKDKVLLALQGKNSFGLFEEWIESSISHIPNFGCEYKIFEHISPKEKIFFSKTGYTGENGLEILLSKKAAINLWDFLISKNVAPCGLGARDTLRLEAGMHLYGQDINEETSPYEAGLGWLVHLENNHEFIGRRVLEEQSRLGIQKKLVGLSIKGKAIGRKGCAVLKGDENIGTITSGSWSPTKHQAIAFAYINTSHALINNEVEILIRGKKFNGVITKRAFYKKNY</sequence>
<accession>A2BTR9</accession>
<reference key="1">
    <citation type="journal article" date="2007" name="PLoS Genet.">
        <title>Patterns and implications of gene gain and loss in the evolution of Prochlorococcus.</title>
        <authorList>
            <person name="Kettler G.C."/>
            <person name="Martiny A.C."/>
            <person name="Huang K."/>
            <person name="Zucker J."/>
            <person name="Coleman M.L."/>
            <person name="Rodrigue S."/>
            <person name="Chen F."/>
            <person name="Lapidus A."/>
            <person name="Ferriera S."/>
            <person name="Johnson J."/>
            <person name="Steglich C."/>
            <person name="Church G.M."/>
            <person name="Richardson P."/>
            <person name="Chisholm S.W."/>
        </authorList>
    </citation>
    <scope>NUCLEOTIDE SEQUENCE [LARGE SCALE GENOMIC DNA]</scope>
    <source>
        <strain>AS9601</strain>
    </source>
</reference>
<feature type="chain" id="PRO_1000047690" description="Aminomethyltransferase">
    <location>
        <begin position="1"/>
        <end position="370"/>
    </location>
</feature>
<organism>
    <name type="scientific">Prochlorococcus marinus (strain AS9601)</name>
    <dbReference type="NCBI Taxonomy" id="146891"/>
    <lineage>
        <taxon>Bacteria</taxon>
        <taxon>Bacillati</taxon>
        <taxon>Cyanobacteriota</taxon>
        <taxon>Cyanophyceae</taxon>
        <taxon>Synechococcales</taxon>
        <taxon>Prochlorococcaceae</taxon>
        <taxon>Prochlorococcus</taxon>
    </lineage>
</organism>
<comment type="function">
    <text evidence="1">The glycine cleavage system catalyzes the degradation of glycine.</text>
</comment>
<comment type="catalytic activity">
    <reaction evidence="1">
        <text>N(6)-[(R)-S(8)-aminomethyldihydrolipoyl]-L-lysyl-[protein] + (6S)-5,6,7,8-tetrahydrofolate = N(6)-[(R)-dihydrolipoyl]-L-lysyl-[protein] + (6R)-5,10-methylene-5,6,7,8-tetrahydrofolate + NH4(+)</text>
        <dbReference type="Rhea" id="RHEA:16945"/>
        <dbReference type="Rhea" id="RHEA-COMP:10475"/>
        <dbReference type="Rhea" id="RHEA-COMP:10492"/>
        <dbReference type="ChEBI" id="CHEBI:15636"/>
        <dbReference type="ChEBI" id="CHEBI:28938"/>
        <dbReference type="ChEBI" id="CHEBI:57453"/>
        <dbReference type="ChEBI" id="CHEBI:83100"/>
        <dbReference type="ChEBI" id="CHEBI:83143"/>
        <dbReference type="EC" id="2.1.2.10"/>
    </reaction>
</comment>
<comment type="subunit">
    <text evidence="1">The glycine cleavage system is composed of four proteins: P, T, L and H.</text>
</comment>
<comment type="similarity">
    <text evidence="1">Belongs to the GcvT family.</text>
</comment>
<evidence type="ECO:0000255" key="1">
    <source>
        <dbReference type="HAMAP-Rule" id="MF_00259"/>
    </source>
</evidence>
<gene>
    <name evidence="1" type="primary">gcvT</name>
    <name type="ordered locus">A9601_18971</name>
</gene>
<proteinExistence type="inferred from homology"/>
<keyword id="KW-0032">Aminotransferase</keyword>
<keyword id="KW-0808">Transferase</keyword>
<dbReference type="EC" id="2.1.2.10" evidence="1"/>
<dbReference type="EMBL" id="CP000551">
    <property type="protein sequence ID" value="ABM71180.1"/>
    <property type="molecule type" value="Genomic_DNA"/>
</dbReference>
<dbReference type="RefSeq" id="WP_011819298.1">
    <property type="nucleotide sequence ID" value="NC_008816.1"/>
</dbReference>
<dbReference type="SMR" id="A2BTR9"/>
<dbReference type="STRING" id="146891.A9601_18971"/>
<dbReference type="KEGG" id="pmb:A9601_18971"/>
<dbReference type="eggNOG" id="COG0404">
    <property type="taxonomic scope" value="Bacteria"/>
</dbReference>
<dbReference type="HOGENOM" id="CLU_007884_10_2_3"/>
<dbReference type="OrthoDB" id="9774591at2"/>
<dbReference type="Proteomes" id="UP000002590">
    <property type="component" value="Chromosome"/>
</dbReference>
<dbReference type="GO" id="GO:0005829">
    <property type="term" value="C:cytosol"/>
    <property type="evidence" value="ECO:0007669"/>
    <property type="project" value="TreeGrafter"/>
</dbReference>
<dbReference type="GO" id="GO:0005960">
    <property type="term" value="C:glycine cleavage complex"/>
    <property type="evidence" value="ECO:0007669"/>
    <property type="project" value="InterPro"/>
</dbReference>
<dbReference type="GO" id="GO:0004047">
    <property type="term" value="F:aminomethyltransferase activity"/>
    <property type="evidence" value="ECO:0007669"/>
    <property type="project" value="UniProtKB-UniRule"/>
</dbReference>
<dbReference type="GO" id="GO:0008483">
    <property type="term" value="F:transaminase activity"/>
    <property type="evidence" value="ECO:0007669"/>
    <property type="project" value="UniProtKB-KW"/>
</dbReference>
<dbReference type="GO" id="GO:0019464">
    <property type="term" value="P:glycine decarboxylation via glycine cleavage system"/>
    <property type="evidence" value="ECO:0007669"/>
    <property type="project" value="UniProtKB-UniRule"/>
</dbReference>
<dbReference type="FunFam" id="4.10.1250.10:FF:000001">
    <property type="entry name" value="Aminomethyltransferase"/>
    <property type="match status" value="1"/>
</dbReference>
<dbReference type="Gene3D" id="2.40.30.110">
    <property type="entry name" value="Aminomethyltransferase beta-barrel domains"/>
    <property type="match status" value="1"/>
</dbReference>
<dbReference type="Gene3D" id="3.30.70.1400">
    <property type="entry name" value="Aminomethyltransferase beta-barrel domains"/>
    <property type="match status" value="1"/>
</dbReference>
<dbReference type="Gene3D" id="4.10.1250.10">
    <property type="entry name" value="Aminomethyltransferase fragment"/>
    <property type="match status" value="1"/>
</dbReference>
<dbReference type="Gene3D" id="3.30.1360.120">
    <property type="entry name" value="Probable tRNA modification gtpase trme, domain 1"/>
    <property type="match status" value="1"/>
</dbReference>
<dbReference type="HAMAP" id="MF_00259">
    <property type="entry name" value="GcvT"/>
    <property type="match status" value="1"/>
</dbReference>
<dbReference type="InterPro" id="IPR006223">
    <property type="entry name" value="GCS_T"/>
</dbReference>
<dbReference type="InterPro" id="IPR022903">
    <property type="entry name" value="GCS_T_bac"/>
</dbReference>
<dbReference type="InterPro" id="IPR013977">
    <property type="entry name" value="GCST_C"/>
</dbReference>
<dbReference type="InterPro" id="IPR006222">
    <property type="entry name" value="GCV_T_N"/>
</dbReference>
<dbReference type="InterPro" id="IPR028896">
    <property type="entry name" value="GcvT/YgfZ/DmdA"/>
</dbReference>
<dbReference type="InterPro" id="IPR029043">
    <property type="entry name" value="GcvT/YgfZ_C"/>
</dbReference>
<dbReference type="InterPro" id="IPR027266">
    <property type="entry name" value="TrmE/GcvT_dom1"/>
</dbReference>
<dbReference type="NCBIfam" id="TIGR00528">
    <property type="entry name" value="gcvT"/>
    <property type="match status" value="1"/>
</dbReference>
<dbReference type="NCBIfam" id="NF001567">
    <property type="entry name" value="PRK00389.1"/>
    <property type="match status" value="1"/>
</dbReference>
<dbReference type="PANTHER" id="PTHR43757">
    <property type="entry name" value="AMINOMETHYLTRANSFERASE"/>
    <property type="match status" value="1"/>
</dbReference>
<dbReference type="PANTHER" id="PTHR43757:SF2">
    <property type="entry name" value="AMINOMETHYLTRANSFERASE, MITOCHONDRIAL"/>
    <property type="match status" value="1"/>
</dbReference>
<dbReference type="Pfam" id="PF01571">
    <property type="entry name" value="GCV_T"/>
    <property type="match status" value="1"/>
</dbReference>
<dbReference type="Pfam" id="PF08669">
    <property type="entry name" value="GCV_T_C"/>
    <property type="match status" value="1"/>
</dbReference>
<dbReference type="PIRSF" id="PIRSF006487">
    <property type="entry name" value="GcvT"/>
    <property type="match status" value="1"/>
</dbReference>
<dbReference type="SUPFAM" id="SSF101790">
    <property type="entry name" value="Aminomethyltransferase beta-barrel domain"/>
    <property type="match status" value="1"/>
</dbReference>
<dbReference type="SUPFAM" id="SSF103025">
    <property type="entry name" value="Folate-binding domain"/>
    <property type="match status" value="1"/>
</dbReference>